<reference key="1">
    <citation type="journal article" date="2004" name="Proc. Natl. Acad. Sci. U.S.A.">
        <title>Genome sequence of Picrophilus torridus and its implications for life around pH 0.</title>
        <authorList>
            <person name="Fuetterer O."/>
            <person name="Angelov A."/>
            <person name="Liesegang H."/>
            <person name="Gottschalk G."/>
            <person name="Schleper C."/>
            <person name="Schepers B."/>
            <person name="Dock C."/>
            <person name="Antranikian G."/>
            <person name="Liebl W."/>
        </authorList>
    </citation>
    <scope>NUCLEOTIDE SEQUENCE [LARGE SCALE GENOMIC DNA]</scope>
    <source>
        <strain>ATCC 700027 / DSM 9790 / JCM 10055 / NBRC 100828 / KAW 2/3</strain>
    </source>
</reference>
<name>Y347_PICTO</name>
<proteinExistence type="inferred from homology"/>
<dbReference type="EMBL" id="AE017261">
    <property type="protein sequence ID" value="AAT42932.1"/>
    <property type="molecule type" value="Genomic_DNA"/>
</dbReference>
<dbReference type="RefSeq" id="WP_011177148.1">
    <property type="nucleotide sequence ID" value="NC_005877.1"/>
</dbReference>
<dbReference type="SMR" id="Q6L270"/>
<dbReference type="STRING" id="263820.PTO0347"/>
<dbReference type="PaxDb" id="263820-PTO0347"/>
<dbReference type="GeneID" id="2844858"/>
<dbReference type="KEGG" id="pto:PTO0347"/>
<dbReference type="eggNOG" id="arCOG02287">
    <property type="taxonomic scope" value="Archaea"/>
</dbReference>
<dbReference type="HOGENOM" id="CLU_117144_1_1_2"/>
<dbReference type="InParanoid" id="Q6L270"/>
<dbReference type="OrthoDB" id="59443at2157"/>
<dbReference type="Proteomes" id="UP000000438">
    <property type="component" value="Chromosome"/>
</dbReference>
<dbReference type="Gene3D" id="3.30.110.70">
    <property type="entry name" value="Hypothetical protein apc22750. Chain B"/>
    <property type="match status" value="1"/>
</dbReference>
<dbReference type="HAMAP" id="MF_00338">
    <property type="entry name" value="UPF0145"/>
    <property type="match status" value="1"/>
</dbReference>
<dbReference type="InterPro" id="IPR035439">
    <property type="entry name" value="UPF0145_dom_sf"/>
</dbReference>
<dbReference type="InterPro" id="IPR002765">
    <property type="entry name" value="UPF0145_YbjQ-like"/>
</dbReference>
<dbReference type="PANTHER" id="PTHR34068:SF2">
    <property type="entry name" value="UPF0145 PROTEIN SCO3412"/>
    <property type="match status" value="1"/>
</dbReference>
<dbReference type="PANTHER" id="PTHR34068">
    <property type="entry name" value="UPF0145 PROTEIN YBJQ"/>
    <property type="match status" value="1"/>
</dbReference>
<dbReference type="Pfam" id="PF01906">
    <property type="entry name" value="YbjQ_1"/>
    <property type="match status" value="1"/>
</dbReference>
<dbReference type="SUPFAM" id="SSF117782">
    <property type="entry name" value="YbjQ-like"/>
    <property type="match status" value="1"/>
</dbReference>
<evidence type="ECO:0000255" key="1">
    <source>
        <dbReference type="HAMAP-Rule" id="MF_00338"/>
    </source>
</evidence>
<sequence length="118" mass="12553">MDDVIVVTSDYVPGHRIVKILGVTWGLTVRSRGLGGNLVAGLRTIAGGEIKEYVTLLNDARETALQRLISSAKAMGATAVINMRFDTSDMAQAMTEIVAYGTAVVTEPVENSQNVTLS</sequence>
<feature type="chain" id="PRO_0000138498" description="UPF0145 protein PTO0347">
    <location>
        <begin position="1"/>
        <end position="118"/>
    </location>
</feature>
<accession>Q6L270</accession>
<organism>
    <name type="scientific">Picrophilus torridus (strain ATCC 700027 / DSM 9790 / JCM 10055 / NBRC 100828 / KAW 2/3)</name>
    <dbReference type="NCBI Taxonomy" id="1122961"/>
    <lineage>
        <taxon>Archaea</taxon>
        <taxon>Methanobacteriati</taxon>
        <taxon>Thermoplasmatota</taxon>
        <taxon>Thermoplasmata</taxon>
        <taxon>Thermoplasmatales</taxon>
        <taxon>Picrophilaceae</taxon>
        <taxon>Picrophilus</taxon>
    </lineage>
</organism>
<protein>
    <recommendedName>
        <fullName evidence="1">UPF0145 protein PTO0347</fullName>
    </recommendedName>
</protein>
<comment type="similarity">
    <text evidence="1">Belongs to the UPF0145 family.</text>
</comment>
<gene>
    <name type="ordered locus">PTO0347</name>
</gene>